<name>MURE_NEIMA</name>
<sequence length="492" mass="53098">MFSKLTPLAETGIPTLSCANAAGRLLHSDSRQIKQGDIFVACPGEYADGRSYIPAAVANGAAFVFWDDDGKFAWNPEWKVPNQGIKDLKHRAGILAAQVYGNVSDGLKFWGVTGTNGKTSITQWLAQAADLLGEKTAIVGTVGNGFWGALEETTHTTPAPVDVQTLLYRFRQQGATVAAMEVSSHGLDQSRVNGVSFRSAIFTNLTRDHLDYHGTMEAYGAIKSRLFYWHGLKHAVINVDDEYGAELAGRLKKDCPDLAVYSYGFSEQADIRIIDFTASSDGIAAVFQTPWGEGKCRTRLLGRFNAQNLAACIALLCANGYPLDNVLDVLAKIRPASGRMDCIMNSGKPLVVVDYAHTPDALEKALATLQEIKPQGAALWCVFGCGGNRDRGKRPLMGAAAVQGADKVVVTSDNPRLENPHDIINDILPAVPAPECVEADRAAAIRYAVEQAAANDIILIAGKGHENYQDVQGVKHRFSDLEIVGQALLTRK</sequence>
<comment type="function">
    <text evidence="1">Catalyzes the addition of meso-diaminopimelic acid to the nucleotide precursor UDP-N-acetylmuramoyl-L-alanyl-D-glutamate (UMAG) in the biosynthesis of bacterial cell-wall peptidoglycan.</text>
</comment>
<comment type="catalytic activity">
    <reaction evidence="1">
        <text>UDP-N-acetyl-alpha-D-muramoyl-L-alanyl-D-glutamate + meso-2,6-diaminopimelate + ATP = UDP-N-acetyl-alpha-D-muramoyl-L-alanyl-gamma-D-glutamyl-meso-2,6-diaminopimelate + ADP + phosphate + H(+)</text>
        <dbReference type="Rhea" id="RHEA:23676"/>
        <dbReference type="ChEBI" id="CHEBI:15378"/>
        <dbReference type="ChEBI" id="CHEBI:30616"/>
        <dbReference type="ChEBI" id="CHEBI:43474"/>
        <dbReference type="ChEBI" id="CHEBI:57791"/>
        <dbReference type="ChEBI" id="CHEBI:83900"/>
        <dbReference type="ChEBI" id="CHEBI:83905"/>
        <dbReference type="ChEBI" id="CHEBI:456216"/>
        <dbReference type="EC" id="6.3.2.13"/>
    </reaction>
</comment>
<comment type="cofactor">
    <cofactor evidence="1">
        <name>Mg(2+)</name>
        <dbReference type="ChEBI" id="CHEBI:18420"/>
    </cofactor>
</comment>
<comment type="pathway">
    <text evidence="1">Cell wall biogenesis; peptidoglycan biosynthesis.</text>
</comment>
<comment type="subcellular location">
    <subcellularLocation>
        <location evidence="1">Cytoplasm</location>
    </subcellularLocation>
</comment>
<comment type="PTM">
    <text evidence="1">Carboxylation is probably crucial for Mg(2+) binding and, consequently, for the gamma-phosphate positioning of ATP.</text>
</comment>
<comment type="similarity">
    <text evidence="1">Belongs to the MurCDEF family. MurE subfamily.</text>
</comment>
<organism>
    <name type="scientific">Neisseria meningitidis serogroup A / serotype 4A (strain DSM 15465 / Z2491)</name>
    <dbReference type="NCBI Taxonomy" id="122587"/>
    <lineage>
        <taxon>Bacteria</taxon>
        <taxon>Pseudomonadati</taxon>
        <taxon>Pseudomonadota</taxon>
        <taxon>Betaproteobacteria</taxon>
        <taxon>Neisseriales</taxon>
        <taxon>Neisseriaceae</taxon>
        <taxon>Neisseria</taxon>
    </lineage>
</organism>
<evidence type="ECO:0000255" key="1">
    <source>
        <dbReference type="HAMAP-Rule" id="MF_00208"/>
    </source>
</evidence>
<proteinExistence type="inferred from homology"/>
<accession>Q9JSZ0</accession>
<accession>A1ITQ5</accession>
<keyword id="KW-0067">ATP-binding</keyword>
<keyword id="KW-0131">Cell cycle</keyword>
<keyword id="KW-0132">Cell division</keyword>
<keyword id="KW-0133">Cell shape</keyword>
<keyword id="KW-0961">Cell wall biogenesis/degradation</keyword>
<keyword id="KW-0963">Cytoplasm</keyword>
<keyword id="KW-0436">Ligase</keyword>
<keyword id="KW-0460">Magnesium</keyword>
<keyword id="KW-0547">Nucleotide-binding</keyword>
<keyword id="KW-0573">Peptidoglycan synthesis</keyword>
<gene>
    <name evidence="1" type="primary">murE</name>
    <name type="ordered locus">NMA2071</name>
</gene>
<dbReference type="EC" id="6.3.2.13" evidence="1"/>
<dbReference type="EMBL" id="AL157959">
    <property type="protein sequence ID" value="CAM09173.1"/>
    <property type="molecule type" value="Genomic_DNA"/>
</dbReference>
<dbReference type="PIR" id="A81778">
    <property type="entry name" value="A81778"/>
</dbReference>
<dbReference type="RefSeq" id="WP_002227032.1">
    <property type="nucleotide sequence ID" value="NC_003116.1"/>
</dbReference>
<dbReference type="SMR" id="Q9JSZ0"/>
<dbReference type="EnsemblBacteria" id="CAM09173">
    <property type="protein sequence ID" value="CAM09173"/>
    <property type="gene ID" value="NMA2071"/>
</dbReference>
<dbReference type="KEGG" id="nma:NMA2071"/>
<dbReference type="HOGENOM" id="CLU_022291_3_2_4"/>
<dbReference type="UniPathway" id="UPA00219"/>
<dbReference type="Proteomes" id="UP000000626">
    <property type="component" value="Chromosome"/>
</dbReference>
<dbReference type="GO" id="GO:0005737">
    <property type="term" value="C:cytoplasm"/>
    <property type="evidence" value="ECO:0007669"/>
    <property type="project" value="UniProtKB-SubCell"/>
</dbReference>
<dbReference type="GO" id="GO:0005524">
    <property type="term" value="F:ATP binding"/>
    <property type="evidence" value="ECO:0007669"/>
    <property type="project" value="UniProtKB-UniRule"/>
</dbReference>
<dbReference type="GO" id="GO:0000287">
    <property type="term" value="F:magnesium ion binding"/>
    <property type="evidence" value="ECO:0007669"/>
    <property type="project" value="UniProtKB-UniRule"/>
</dbReference>
<dbReference type="GO" id="GO:0008765">
    <property type="term" value="F:UDP-N-acetylmuramoylalanyl-D-glutamate-2,6-diaminopimelate ligase activity"/>
    <property type="evidence" value="ECO:0007669"/>
    <property type="project" value="UniProtKB-UniRule"/>
</dbReference>
<dbReference type="GO" id="GO:0051301">
    <property type="term" value="P:cell division"/>
    <property type="evidence" value="ECO:0007669"/>
    <property type="project" value="UniProtKB-KW"/>
</dbReference>
<dbReference type="GO" id="GO:0071555">
    <property type="term" value="P:cell wall organization"/>
    <property type="evidence" value="ECO:0007669"/>
    <property type="project" value="UniProtKB-KW"/>
</dbReference>
<dbReference type="GO" id="GO:0009252">
    <property type="term" value="P:peptidoglycan biosynthetic process"/>
    <property type="evidence" value="ECO:0007669"/>
    <property type="project" value="UniProtKB-UniRule"/>
</dbReference>
<dbReference type="GO" id="GO:0008360">
    <property type="term" value="P:regulation of cell shape"/>
    <property type="evidence" value="ECO:0007669"/>
    <property type="project" value="UniProtKB-KW"/>
</dbReference>
<dbReference type="Gene3D" id="3.90.190.20">
    <property type="entry name" value="Mur ligase, C-terminal domain"/>
    <property type="match status" value="1"/>
</dbReference>
<dbReference type="Gene3D" id="3.40.1190.10">
    <property type="entry name" value="Mur-like, catalytic domain"/>
    <property type="match status" value="1"/>
</dbReference>
<dbReference type="Gene3D" id="3.40.1390.10">
    <property type="entry name" value="MurE/MurF, N-terminal domain"/>
    <property type="match status" value="1"/>
</dbReference>
<dbReference type="HAMAP" id="MF_00208">
    <property type="entry name" value="MurE"/>
    <property type="match status" value="1"/>
</dbReference>
<dbReference type="InterPro" id="IPR036565">
    <property type="entry name" value="Mur-like_cat_sf"/>
</dbReference>
<dbReference type="InterPro" id="IPR004101">
    <property type="entry name" value="Mur_ligase_C"/>
</dbReference>
<dbReference type="InterPro" id="IPR036615">
    <property type="entry name" value="Mur_ligase_C_dom_sf"/>
</dbReference>
<dbReference type="InterPro" id="IPR013221">
    <property type="entry name" value="Mur_ligase_cen"/>
</dbReference>
<dbReference type="InterPro" id="IPR000713">
    <property type="entry name" value="Mur_ligase_N"/>
</dbReference>
<dbReference type="InterPro" id="IPR035911">
    <property type="entry name" value="MurE/MurF_N"/>
</dbReference>
<dbReference type="InterPro" id="IPR005761">
    <property type="entry name" value="UDP-N-AcMur-Glu-dNH2Pim_ligase"/>
</dbReference>
<dbReference type="NCBIfam" id="TIGR01085">
    <property type="entry name" value="murE"/>
    <property type="match status" value="1"/>
</dbReference>
<dbReference type="NCBIfam" id="NF001126">
    <property type="entry name" value="PRK00139.1-4"/>
    <property type="match status" value="1"/>
</dbReference>
<dbReference type="PANTHER" id="PTHR23135">
    <property type="entry name" value="MUR LIGASE FAMILY MEMBER"/>
    <property type="match status" value="1"/>
</dbReference>
<dbReference type="PANTHER" id="PTHR23135:SF4">
    <property type="entry name" value="UDP-N-ACETYLMURAMOYL-L-ALANYL-D-GLUTAMATE--2,6-DIAMINOPIMELATE LIGASE MURE HOMOLOG, CHLOROPLASTIC"/>
    <property type="match status" value="1"/>
</dbReference>
<dbReference type="Pfam" id="PF01225">
    <property type="entry name" value="Mur_ligase"/>
    <property type="match status" value="1"/>
</dbReference>
<dbReference type="Pfam" id="PF02875">
    <property type="entry name" value="Mur_ligase_C"/>
    <property type="match status" value="1"/>
</dbReference>
<dbReference type="Pfam" id="PF08245">
    <property type="entry name" value="Mur_ligase_M"/>
    <property type="match status" value="1"/>
</dbReference>
<dbReference type="SUPFAM" id="SSF53623">
    <property type="entry name" value="MurD-like peptide ligases, catalytic domain"/>
    <property type="match status" value="1"/>
</dbReference>
<dbReference type="SUPFAM" id="SSF53244">
    <property type="entry name" value="MurD-like peptide ligases, peptide-binding domain"/>
    <property type="match status" value="1"/>
</dbReference>
<dbReference type="SUPFAM" id="SSF63418">
    <property type="entry name" value="MurE/MurF N-terminal domain"/>
    <property type="match status" value="1"/>
</dbReference>
<protein>
    <recommendedName>
        <fullName evidence="1">UDP-N-acetylmuramoyl-L-alanyl-D-glutamate--2,6-diaminopimelate ligase</fullName>
        <ecNumber evidence="1">6.3.2.13</ecNumber>
    </recommendedName>
    <alternativeName>
        <fullName evidence="1">Meso-A2pm-adding enzyme</fullName>
    </alternativeName>
    <alternativeName>
        <fullName evidence="1">Meso-diaminopimelate-adding enzyme</fullName>
    </alternativeName>
    <alternativeName>
        <fullName evidence="1">UDP-MurNAc-L-Ala-D-Glu:meso-diaminopimelate ligase</fullName>
    </alternativeName>
    <alternativeName>
        <fullName evidence="1">UDP-MurNAc-tripeptide synthetase</fullName>
    </alternativeName>
    <alternativeName>
        <fullName evidence="1">UDP-N-acetylmuramyl-tripeptide synthetase</fullName>
    </alternativeName>
</protein>
<reference key="1">
    <citation type="journal article" date="2000" name="Nature">
        <title>Complete DNA sequence of a serogroup A strain of Neisseria meningitidis Z2491.</title>
        <authorList>
            <person name="Parkhill J."/>
            <person name="Achtman M."/>
            <person name="James K.D."/>
            <person name="Bentley S.D."/>
            <person name="Churcher C.M."/>
            <person name="Klee S.R."/>
            <person name="Morelli G."/>
            <person name="Basham D."/>
            <person name="Brown D."/>
            <person name="Chillingworth T."/>
            <person name="Davies R.M."/>
            <person name="Davis P."/>
            <person name="Devlin K."/>
            <person name="Feltwell T."/>
            <person name="Hamlin N."/>
            <person name="Holroyd S."/>
            <person name="Jagels K."/>
            <person name="Leather S."/>
            <person name="Moule S."/>
            <person name="Mungall K.L."/>
            <person name="Quail M.A."/>
            <person name="Rajandream M.A."/>
            <person name="Rutherford K.M."/>
            <person name="Simmonds M."/>
            <person name="Skelton J."/>
            <person name="Whitehead S."/>
            <person name="Spratt B.G."/>
            <person name="Barrell B.G."/>
        </authorList>
    </citation>
    <scope>NUCLEOTIDE SEQUENCE [LARGE SCALE GENOMIC DNA]</scope>
    <source>
        <strain>DSM 15465 / Z2491</strain>
    </source>
</reference>
<feature type="chain" id="PRO_0000101915" description="UDP-N-acetylmuramoyl-L-alanyl-D-glutamate--2,6-diaminopimelate ligase">
    <location>
        <begin position="1"/>
        <end position="492"/>
    </location>
</feature>
<feature type="short sequence motif" description="Meso-diaminopimelate recognition motif">
    <location>
        <begin position="413"/>
        <end position="416"/>
    </location>
</feature>
<feature type="binding site" evidence="1">
    <location>
        <position position="30"/>
    </location>
    <ligand>
        <name>UDP-N-acetyl-alpha-D-muramoyl-L-alanyl-D-glutamate</name>
        <dbReference type="ChEBI" id="CHEBI:83900"/>
    </ligand>
</feature>
<feature type="binding site" evidence="1">
    <location>
        <begin position="114"/>
        <end position="120"/>
    </location>
    <ligand>
        <name>ATP</name>
        <dbReference type="ChEBI" id="CHEBI:30616"/>
    </ligand>
</feature>
<feature type="binding site" evidence="1">
    <location>
        <begin position="156"/>
        <end position="157"/>
    </location>
    <ligand>
        <name>UDP-N-acetyl-alpha-D-muramoyl-L-alanyl-D-glutamate</name>
        <dbReference type="ChEBI" id="CHEBI:83900"/>
    </ligand>
</feature>
<feature type="binding site" evidence="1">
    <location>
        <position position="183"/>
    </location>
    <ligand>
        <name>UDP-N-acetyl-alpha-D-muramoyl-L-alanyl-D-glutamate</name>
        <dbReference type="ChEBI" id="CHEBI:83900"/>
    </ligand>
</feature>
<feature type="binding site" evidence="1">
    <location>
        <position position="189"/>
    </location>
    <ligand>
        <name>UDP-N-acetyl-alpha-D-muramoyl-L-alanyl-D-glutamate</name>
        <dbReference type="ChEBI" id="CHEBI:83900"/>
    </ligand>
</feature>
<feature type="binding site" evidence="1">
    <location>
        <position position="191"/>
    </location>
    <ligand>
        <name>UDP-N-acetyl-alpha-D-muramoyl-L-alanyl-D-glutamate</name>
        <dbReference type="ChEBI" id="CHEBI:83900"/>
    </ligand>
</feature>
<feature type="binding site" evidence="1">
    <location>
        <position position="389"/>
    </location>
    <ligand>
        <name>meso-2,6-diaminopimelate</name>
        <dbReference type="ChEBI" id="CHEBI:57791"/>
    </ligand>
</feature>
<feature type="binding site" evidence="1">
    <location>
        <begin position="413"/>
        <end position="416"/>
    </location>
    <ligand>
        <name>meso-2,6-diaminopimelate</name>
        <dbReference type="ChEBI" id="CHEBI:57791"/>
    </ligand>
</feature>
<feature type="binding site" evidence="1">
    <location>
        <position position="462"/>
    </location>
    <ligand>
        <name>meso-2,6-diaminopimelate</name>
        <dbReference type="ChEBI" id="CHEBI:57791"/>
    </ligand>
</feature>
<feature type="binding site" evidence="1">
    <location>
        <position position="466"/>
    </location>
    <ligand>
        <name>meso-2,6-diaminopimelate</name>
        <dbReference type="ChEBI" id="CHEBI:57791"/>
    </ligand>
</feature>
<feature type="modified residue" description="N6-carboxylysine" evidence="1">
    <location>
        <position position="223"/>
    </location>
</feature>